<protein>
    <recommendedName>
        <fullName evidence="1">NADH-quinone oxidoreductase subunit I</fullName>
        <ecNumber evidence="1">7.1.1.-</ecNumber>
    </recommendedName>
    <alternativeName>
        <fullName evidence="1">NADH dehydrogenase I subunit I</fullName>
    </alternativeName>
    <alternativeName>
        <fullName evidence="1">NDH-1 subunit I</fullName>
    </alternativeName>
</protein>
<sequence>MALLDRTARSFLLTEIVSGMALTLKYFFKPKATINYPYEKNPISPRFKGEHALRRYANGEERCIACKLCEAVCPALAITIEAEPRADGSRRTTRYDIDMTKCIYCGLCEEACPVDAIVEGPNLEFATETREELMYNKDRLLANGDRWEPEIARRLELDAPYR</sequence>
<feature type="chain" id="PRO_0000298500" description="NADH-quinone oxidoreductase subunit I">
    <location>
        <begin position="1"/>
        <end position="162"/>
    </location>
</feature>
<feature type="domain" description="4Fe-4S ferredoxin-type 1" evidence="1">
    <location>
        <begin position="53"/>
        <end position="83"/>
    </location>
</feature>
<feature type="domain" description="4Fe-4S ferredoxin-type 2" evidence="1">
    <location>
        <begin position="93"/>
        <end position="122"/>
    </location>
</feature>
<feature type="binding site" evidence="1">
    <location>
        <position position="63"/>
    </location>
    <ligand>
        <name>[4Fe-4S] cluster</name>
        <dbReference type="ChEBI" id="CHEBI:49883"/>
        <label>1</label>
    </ligand>
</feature>
<feature type="binding site" evidence="1">
    <location>
        <position position="66"/>
    </location>
    <ligand>
        <name>[4Fe-4S] cluster</name>
        <dbReference type="ChEBI" id="CHEBI:49883"/>
        <label>1</label>
    </ligand>
</feature>
<feature type="binding site" evidence="1">
    <location>
        <position position="69"/>
    </location>
    <ligand>
        <name>[4Fe-4S] cluster</name>
        <dbReference type="ChEBI" id="CHEBI:49883"/>
        <label>1</label>
    </ligand>
</feature>
<feature type="binding site" evidence="1">
    <location>
        <position position="73"/>
    </location>
    <ligand>
        <name>[4Fe-4S] cluster</name>
        <dbReference type="ChEBI" id="CHEBI:49883"/>
        <label>2</label>
    </ligand>
</feature>
<feature type="binding site" evidence="1">
    <location>
        <position position="102"/>
    </location>
    <ligand>
        <name>[4Fe-4S] cluster</name>
        <dbReference type="ChEBI" id="CHEBI:49883"/>
        <label>2</label>
    </ligand>
</feature>
<feature type="binding site" evidence="1">
    <location>
        <position position="105"/>
    </location>
    <ligand>
        <name>[4Fe-4S] cluster</name>
        <dbReference type="ChEBI" id="CHEBI:49883"/>
        <label>2</label>
    </ligand>
</feature>
<feature type="binding site" evidence="1">
    <location>
        <position position="108"/>
    </location>
    <ligand>
        <name>[4Fe-4S] cluster</name>
        <dbReference type="ChEBI" id="CHEBI:49883"/>
        <label>2</label>
    </ligand>
</feature>
<feature type="binding site" evidence="1">
    <location>
        <position position="112"/>
    </location>
    <ligand>
        <name>[4Fe-4S] cluster</name>
        <dbReference type="ChEBI" id="CHEBI:49883"/>
        <label>1</label>
    </ligand>
</feature>
<accession>Q0BSL0</accession>
<dbReference type="EC" id="7.1.1.-" evidence="1"/>
<dbReference type="EMBL" id="CP000394">
    <property type="protein sequence ID" value="ABI62192.1"/>
    <property type="molecule type" value="Genomic_DNA"/>
</dbReference>
<dbReference type="RefSeq" id="WP_011632001.1">
    <property type="nucleotide sequence ID" value="NC_008343.2"/>
</dbReference>
<dbReference type="SMR" id="Q0BSL0"/>
<dbReference type="STRING" id="391165.GbCGDNIH1_1294"/>
<dbReference type="KEGG" id="gbe:GbCGDNIH1_1294"/>
<dbReference type="eggNOG" id="COG1143">
    <property type="taxonomic scope" value="Bacteria"/>
</dbReference>
<dbReference type="HOGENOM" id="CLU_067218_5_1_5"/>
<dbReference type="OrthoDB" id="9808559at2"/>
<dbReference type="Proteomes" id="UP000001963">
    <property type="component" value="Chromosome"/>
</dbReference>
<dbReference type="GO" id="GO:0005886">
    <property type="term" value="C:plasma membrane"/>
    <property type="evidence" value="ECO:0007669"/>
    <property type="project" value="UniProtKB-SubCell"/>
</dbReference>
<dbReference type="GO" id="GO:0051539">
    <property type="term" value="F:4 iron, 4 sulfur cluster binding"/>
    <property type="evidence" value="ECO:0007669"/>
    <property type="project" value="UniProtKB-KW"/>
</dbReference>
<dbReference type="GO" id="GO:0005506">
    <property type="term" value="F:iron ion binding"/>
    <property type="evidence" value="ECO:0007669"/>
    <property type="project" value="UniProtKB-UniRule"/>
</dbReference>
<dbReference type="GO" id="GO:0050136">
    <property type="term" value="F:NADH:ubiquinone reductase (non-electrogenic) activity"/>
    <property type="evidence" value="ECO:0007669"/>
    <property type="project" value="UniProtKB-UniRule"/>
</dbReference>
<dbReference type="GO" id="GO:0048038">
    <property type="term" value="F:quinone binding"/>
    <property type="evidence" value="ECO:0007669"/>
    <property type="project" value="UniProtKB-KW"/>
</dbReference>
<dbReference type="GO" id="GO:0009060">
    <property type="term" value="P:aerobic respiration"/>
    <property type="evidence" value="ECO:0007669"/>
    <property type="project" value="TreeGrafter"/>
</dbReference>
<dbReference type="FunFam" id="3.30.70.3270:FF:000001">
    <property type="entry name" value="NADH-quinone oxidoreductase subunit I 1"/>
    <property type="match status" value="1"/>
</dbReference>
<dbReference type="Gene3D" id="3.30.70.3270">
    <property type="match status" value="1"/>
</dbReference>
<dbReference type="HAMAP" id="MF_01351">
    <property type="entry name" value="NDH1_NuoI"/>
    <property type="match status" value="1"/>
</dbReference>
<dbReference type="InterPro" id="IPR017896">
    <property type="entry name" value="4Fe4S_Fe-S-bd"/>
</dbReference>
<dbReference type="InterPro" id="IPR017900">
    <property type="entry name" value="4Fe4S_Fe_S_CS"/>
</dbReference>
<dbReference type="InterPro" id="IPR010226">
    <property type="entry name" value="NADH_quinone_OxRdtase_chainI"/>
</dbReference>
<dbReference type="NCBIfam" id="TIGR01971">
    <property type="entry name" value="NuoI"/>
    <property type="match status" value="1"/>
</dbReference>
<dbReference type="NCBIfam" id="NF004538">
    <property type="entry name" value="PRK05888.1-4"/>
    <property type="match status" value="1"/>
</dbReference>
<dbReference type="NCBIfam" id="NF004539">
    <property type="entry name" value="PRK05888.1-5"/>
    <property type="match status" value="1"/>
</dbReference>
<dbReference type="PANTHER" id="PTHR10849:SF20">
    <property type="entry name" value="NADH DEHYDROGENASE [UBIQUINONE] IRON-SULFUR PROTEIN 8, MITOCHONDRIAL"/>
    <property type="match status" value="1"/>
</dbReference>
<dbReference type="PANTHER" id="PTHR10849">
    <property type="entry name" value="NADH DEHYDROGENASE UBIQUINONE IRON-SULFUR PROTEIN 8, MITOCHONDRIAL"/>
    <property type="match status" value="1"/>
</dbReference>
<dbReference type="Pfam" id="PF12838">
    <property type="entry name" value="Fer4_7"/>
    <property type="match status" value="1"/>
</dbReference>
<dbReference type="SUPFAM" id="SSF54862">
    <property type="entry name" value="4Fe-4S ferredoxins"/>
    <property type="match status" value="1"/>
</dbReference>
<dbReference type="PROSITE" id="PS00198">
    <property type="entry name" value="4FE4S_FER_1"/>
    <property type="match status" value="2"/>
</dbReference>
<dbReference type="PROSITE" id="PS51379">
    <property type="entry name" value="4FE4S_FER_2"/>
    <property type="match status" value="2"/>
</dbReference>
<gene>
    <name evidence="1" type="primary">nuoI</name>
    <name type="ordered locus">GbCGDNIH1_1294</name>
</gene>
<name>NUOI_GRABC</name>
<comment type="function">
    <text evidence="1">NDH-1 shuttles electrons from NADH, via FMN and iron-sulfur (Fe-S) centers, to quinones in the respiratory chain. The immediate electron acceptor for the enzyme in this species is believed to be ubiquinone. Couples the redox reaction to proton translocation (for every two electrons transferred, four hydrogen ions are translocated across the cytoplasmic membrane), and thus conserves the redox energy in a proton gradient.</text>
</comment>
<comment type="catalytic activity">
    <reaction evidence="1">
        <text>a quinone + NADH + 5 H(+)(in) = a quinol + NAD(+) + 4 H(+)(out)</text>
        <dbReference type="Rhea" id="RHEA:57888"/>
        <dbReference type="ChEBI" id="CHEBI:15378"/>
        <dbReference type="ChEBI" id="CHEBI:24646"/>
        <dbReference type="ChEBI" id="CHEBI:57540"/>
        <dbReference type="ChEBI" id="CHEBI:57945"/>
        <dbReference type="ChEBI" id="CHEBI:132124"/>
    </reaction>
</comment>
<comment type="cofactor">
    <cofactor evidence="1">
        <name>[4Fe-4S] cluster</name>
        <dbReference type="ChEBI" id="CHEBI:49883"/>
    </cofactor>
    <text evidence="1">Binds 2 [4Fe-4S] clusters per subunit.</text>
</comment>
<comment type="subunit">
    <text evidence="1">NDH-1 is composed of 14 different subunits. Subunits NuoA, H, J, K, L, M, N constitute the membrane sector of the complex.</text>
</comment>
<comment type="subcellular location">
    <subcellularLocation>
        <location evidence="1">Cell inner membrane</location>
        <topology evidence="1">Peripheral membrane protein</topology>
    </subcellularLocation>
</comment>
<comment type="similarity">
    <text evidence="1">Belongs to the complex I 23 kDa subunit family.</text>
</comment>
<organism>
    <name type="scientific">Granulibacter bethesdensis (strain ATCC BAA-1260 / CGDNIH1)</name>
    <dbReference type="NCBI Taxonomy" id="391165"/>
    <lineage>
        <taxon>Bacteria</taxon>
        <taxon>Pseudomonadati</taxon>
        <taxon>Pseudomonadota</taxon>
        <taxon>Alphaproteobacteria</taxon>
        <taxon>Acetobacterales</taxon>
        <taxon>Acetobacteraceae</taxon>
        <taxon>Granulibacter</taxon>
    </lineage>
</organism>
<evidence type="ECO:0000255" key="1">
    <source>
        <dbReference type="HAMAP-Rule" id="MF_01351"/>
    </source>
</evidence>
<proteinExistence type="inferred from homology"/>
<reference key="1">
    <citation type="journal article" date="2007" name="J. Bacteriol.">
        <title>Genome sequence analysis of the emerging human pathogenic acetic acid bacterium Granulibacter bethesdensis.</title>
        <authorList>
            <person name="Greenberg D.E."/>
            <person name="Porcella S.F."/>
            <person name="Zelazny A.M."/>
            <person name="Virtaneva K."/>
            <person name="Sturdevant D.E."/>
            <person name="Kupko J.J. III"/>
            <person name="Barbian K.D."/>
            <person name="Babar A."/>
            <person name="Dorward D.W."/>
            <person name="Holland S.M."/>
        </authorList>
    </citation>
    <scope>NUCLEOTIDE SEQUENCE [LARGE SCALE GENOMIC DNA]</scope>
    <source>
        <strain>ATCC BAA-1260 / CGDNIH1</strain>
    </source>
</reference>
<keyword id="KW-0004">4Fe-4S</keyword>
<keyword id="KW-0997">Cell inner membrane</keyword>
<keyword id="KW-1003">Cell membrane</keyword>
<keyword id="KW-0408">Iron</keyword>
<keyword id="KW-0411">Iron-sulfur</keyword>
<keyword id="KW-0472">Membrane</keyword>
<keyword id="KW-0479">Metal-binding</keyword>
<keyword id="KW-0520">NAD</keyword>
<keyword id="KW-0874">Quinone</keyword>
<keyword id="KW-1185">Reference proteome</keyword>
<keyword id="KW-0677">Repeat</keyword>
<keyword id="KW-1278">Translocase</keyword>
<keyword id="KW-0830">Ubiquinone</keyword>